<gene>
    <name evidence="1" type="primary">trhO</name>
    <name type="ordered locus">FTF1085</name>
</gene>
<organism>
    <name type="scientific">Francisella tularensis subsp. tularensis (strain FSC 198)</name>
    <dbReference type="NCBI Taxonomy" id="393115"/>
    <lineage>
        <taxon>Bacteria</taxon>
        <taxon>Pseudomonadati</taxon>
        <taxon>Pseudomonadota</taxon>
        <taxon>Gammaproteobacteria</taxon>
        <taxon>Thiotrichales</taxon>
        <taxon>Francisellaceae</taxon>
        <taxon>Francisella</taxon>
    </lineage>
</organism>
<reference key="1">
    <citation type="journal article" date="2007" name="PLoS ONE">
        <title>Genome sequencing shows that European isolates of Francisella tularensis subspecies tularensis are almost identical to US laboratory strain Schu S4.</title>
        <authorList>
            <person name="Chaudhuri R.R."/>
            <person name="Ren C.-P."/>
            <person name="Desmond L."/>
            <person name="Vincent G.A."/>
            <person name="Silman N.J."/>
            <person name="Brehm J.K."/>
            <person name="Elmore M.J."/>
            <person name="Hudson M.J."/>
            <person name="Forsman M."/>
            <person name="Isherwood K.E."/>
            <person name="Gurycova D."/>
            <person name="Minton N.P."/>
            <person name="Titball R.W."/>
            <person name="Pallen M.J."/>
            <person name="Vipond R."/>
        </authorList>
    </citation>
    <scope>NUCLEOTIDE SEQUENCE [LARGE SCALE GENOMIC DNA]</scope>
    <source>
        <strain>FSC 198</strain>
    </source>
</reference>
<comment type="function">
    <text evidence="1">Catalyzes oxygen-dependent 5-hydroxyuridine (ho5U) modification at position 34 in tRNAs.</text>
</comment>
<comment type="catalytic activity">
    <reaction evidence="1">
        <text>uridine(34) in tRNA + AH2 + O2 = 5-hydroxyuridine(34) in tRNA + A + H2O</text>
        <dbReference type="Rhea" id="RHEA:64224"/>
        <dbReference type="Rhea" id="RHEA-COMP:11727"/>
        <dbReference type="Rhea" id="RHEA-COMP:13381"/>
        <dbReference type="ChEBI" id="CHEBI:13193"/>
        <dbReference type="ChEBI" id="CHEBI:15377"/>
        <dbReference type="ChEBI" id="CHEBI:15379"/>
        <dbReference type="ChEBI" id="CHEBI:17499"/>
        <dbReference type="ChEBI" id="CHEBI:65315"/>
        <dbReference type="ChEBI" id="CHEBI:136877"/>
    </reaction>
</comment>
<comment type="similarity">
    <text evidence="1">Belongs to the TrhO family.</text>
</comment>
<protein>
    <recommendedName>
        <fullName evidence="1">tRNA uridine(34) hydroxylase</fullName>
        <ecNumber evidence="1">1.14.-.-</ecNumber>
    </recommendedName>
    <alternativeName>
        <fullName evidence="1">tRNA hydroxylation protein O</fullName>
    </alternativeName>
</protein>
<sequence length="332" mass="38226">MGIYMSQIVVCAMYKFVTLEDFEAMRQPLLDTMIKNNVKGTLLLANEGINGTVAGTRESIDNLLAYLKADPRLVDIDYKESYHQEMPFYRSKVKLKKEIVTLGIDEIDPNKICGKYVEPKDWNDLISDPETVLIDTRNEYEIEIGTFKNAINPHTENFREFPQYVDENLDPKKHKKVAMFCTGGIRCEKSTALLKAKGFDEVYHLKGGILKYLEEVPKEKSMWQGECFVFDSRVAVNHDLEKGNYDQCFACRMPITEDDKKRPEYVKGISCHHCYDKVTEKQKARFAEREKQSQLAAEKGFSHVGDEAKKLAQLNKQKKQQAKEAARKKAQQ</sequence>
<dbReference type="EC" id="1.14.-.-" evidence="1"/>
<dbReference type="EMBL" id="AM286280">
    <property type="protein sequence ID" value="CAL09101.1"/>
    <property type="molecule type" value="Genomic_DNA"/>
</dbReference>
<dbReference type="SMR" id="Q14HD0"/>
<dbReference type="KEGG" id="ftf:FTF1085"/>
<dbReference type="HOGENOM" id="CLU_038878_0_0_6"/>
<dbReference type="GO" id="GO:0016705">
    <property type="term" value="F:oxidoreductase activity, acting on paired donors, with incorporation or reduction of molecular oxygen"/>
    <property type="evidence" value="ECO:0007669"/>
    <property type="project" value="UniProtKB-UniRule"/>
</dbReference>
<dbReference type="GO" id="GO:0006400">
    <property type="term" value="P:tRNA modification"/>
    <property type="evidence" value="ECO:0007669"/>
    <property type="project" value="UniProtKB-UniRule"/>
</dbReference>
<dbReference type="CDD" id="cd01518">
    <property type="entry name" value="RHOD_YceA"/>
    <property type="match status" value="1"/>
</dbReference>
<dbReference type="Gene3D" id="3.30.70.100">
    <property type="match status" value="1"/>
</dbReference>
<dbReference type="Gene3D" id="3.40.250.10">
    <property type="entry name" value="Rhodanese-like domain"/>
    <property type="match status" value="1"/>
</dbReference>
<dbReference type="HAMAP" id="MF_00469">
    <property type="entry name" value="TrhO"/>
    <property type="match status" value="1"/>
</dbReference>
<dbReference type="InterPro" id="IPR001763">
    <property type="entry name" value="Rhodanese-like_dom"/>
</dbReference>
<dbReference type="InterPro" id="IPR036873">
    <property type="entry name" value="Rhodanese-like_dom_sf"/>
</dbReference>
<dbReference type="InterPro" id="IPR020936">
    <property type="entry name" value="TrhO"/>
</dbReference>
<dbReference type="InterPro" id="IPR040503">
    <property type="entry name" value="TRHO_N"/>
</dbReference>
<dbReference type="NCBIfam" id="NF001136">
    <property type="entry name" value="PRK00142.1-4"/>
    <property type="match status" value="1"/>
</dbReference>
<dbReference type="PANTHER" id="PTHR43268:SF3">
    <property type="entry name" value="RHODANESE-LIKE DOMAIN-CONTAINING PROTEIN 7-RELATED"/>
    <property type="match status" value="1"/>
</dbReference>
<dbReference type="PANTHER" id="PTHR43268">
    <property type="entry name" value="THIOSULFATE SULFURTRANSFERASE/RHODANESE-LIKE DOMAIN-CONTAINING PROTEIN 2"/>
    <property type="match status" value="1"/>
</dbReference>
<dbReference type="Pfam" id="PF00581">
    <property type="entry name" value="Rhodanese"/>
    <property type="match status" value="1"/>
</dbReference>
<dbReference type="Pfam" id="PF17773">
    <property type="entry name" value="UPF0176_N"/>
    <property type="match status" value="1"/>
</dbReference>
<dbReference type="SMART" id="SM00450">
    <property type="entry name" value="RHOD"/>
    <property type="match status" value="1"/>
</dbReference>
<dbReference type="SUPFAM" id="SSF52821">
    <property type="entry name" value="Rhodanese/Cell cycle control phosphatase"/>
    <property type="match status" value="1"/>
</dbReference>
<dbReference type="PROSITE" id="PS50206">
    <property type="entry name" value="RHODANESE_3"/>
    <property type="match status" value="1"/>
</dbReference>
<accession>Q14HD0</accession>
<evidence type="ECO:0000255" key="1">
    <source>
        <dbReference type="HAMAP-Rule" id="MF_00469"/>
    </source>
</evidence>
<evidence type="ECO:0000256" key="2">
    <source>
        <dbReference type="SAM" id="MobiDB-lite"/>
    </source>
</evidence>
<feature type="chain" id="PRO_1000013740" description="tRNA uridine(34) hydroxylase">
    <location>
        <begin position="1"/>
        <end position="332"/>
    </location>
</feature>
<feature type="domain" description="Rhodanese" evidence="1">
    <location>
        <begin position="127"/>
        <end position="221"/>
    </location>
</feature>
<feature type="region of interest" description="Disordered" evidence="2">
    <location>
        <begin position="308"/>
        <end position="332"/>
    </location>
</feature>
<feature type="compositionally biased region" description="Basic and acidic residues" evidence="2">
    <location>
        <begin position="321"/>
        <end position="332"/>
    </location>
</feature>
<feature type="active site" description="Cysteine persulfide intermediate" evidence="1">
    <location>
        <position position="181"/>
    </location>
</feature>
<keyword id="KW-0560">Oxidoreductase</keyword>
<keyword id="KW-0819">tRNA processing</keyword>
<name>TRHO_FRAT1</name>
<proteinExistence type="inferred from homology"/>